<feature type="chain" id="PRO_1000166186" description="Large ribosomal subunit protein bL25">
    <location>
        <begin position="1"/>
        <end position="203"/>
    </location>
</feature>
<keyword id="KW-0687">Ribonucleoprotein</keyword>
<keyword id="KW-0689">Ribosomal protein</keyword>
<keyword id="KW-0694">RNA-binding</keyword>
<keyword id="KW-0699">rRNA-binding</keyword>
<name>RL25_WOLWR</name>
<comment type="function">
    <text evidence="1">This is one of the proteins that binds to the 5S RNA in the ribosome where it forms part of the central protuberance.</text>
</comment>
<comment type="subunit">
    <text evidence="1">Part of the 50S ribosomal subunit; part of the 5S rRNA/L5/L18/L25 subcomplex. Contacts the 5S rRNA. Binds to the 5S rRNA independently of L5 and L18.</text>
</comment>
<comment type="similarity">
    <text evidence="1">Belongs to the bacterial ribosomal protein bL25 family. CTC subfamily.</text>
</comment>
<sequence length="203" mass="22373">MTQQEIVTINAELRDITKTKAMHSLRKKGNIPGIIYGKGHDNVNLTLSAKEFTKQYKSGSLSAHLIELNISGKKEYALVRDIQLHVVKDTVQHVDFQFVDKGSEIKIDIPLSFVNESKAPGIKLGGVLNVLCRSIAVKCSPDKIPQVIEVDLSGKMIGQSIHINDVKLPEGVKFVAHEEENFTIVTISAADSDVEEPQAETEE</sequence>
<accession>C0R595</accession>
<dbReference type="EMBL" id="CP001391">
    <property type="protein sequence ID" value="ACN94937.1"/>
    <property type="molecule type" value="Genomic_DNA"/>
</dbReference>
<dbReference type="RefSeq" id="WP_010962412.1">
    <property type="nucleotide sequence ID" value="NZ_MKIF01000024.1"/>
</dbReference>
<dbReference type="SMR" id="C0R595"/>
<dbReference type="STRING" id="66084.WRi_000820"/>
<dbReference type="KEGG" id="wri:WRi_000820"/>
<dbReference type="HOGENOM" id="CLU_075939_0_0_5"/>
<dbReference type="Proteomes" id="UP000001293">
    <property type="component" value="Chromosome"/>
</dbReference>
<dbReference type="GO" id="GO:0022625">
    <property type="term" value="C:cytosolic large ribosomal subunit"/>
    <property type="evidence" value="ECO:0007669"/>
    <property type="project" value="TreeGrafter"/>
</dbReference>
<dbReference type="GO" id="GO:0008097">
    <property type="term" value="F:5S rRNA binding"/>
    <property type="evidence" value="ECO:0007669"/>
    <property type="project" value="InterPro"/>
</dbReference>
<dbReference type="GO" id="GO:0003735">
    <property type="term" value="F:structural constituent of ribosome"/>
    <property type="evidence" value="ECO:0007669"/>
    <property type="project" value="InterPro"/>
</dbReference>
<dbReference type="GO" id="GO:0006412">
    <property type="term" value="P:translation"/>
    <property type="evidence" value="ECO:0007669"/>
    <property type="project" value="UniProtKB-UniRule"/>
</dbReference>
<dbReference type="CDD" id="cd00495">
    <property type="entry name" value="Ribosomal_L25_TL5_CTC"/>
    <property type="match status" value="1"/>
</dbReference>
<dbReference type="Gene3D" id="2.170.120.20">
    <property type="entry name" value="Ribosomal protein L25, beta domain"/>
    <property type="match status" value="1"/>
</dbReference>
<dbReference type="Gene3D" id="2.40.240.10">
    <property type="entry name" value="Ribosomal Protein L25, Chain P"/>
    <property type="match status" value="1"/>
</dbReference>
<dbReference type="HAMAP" id="MF_01334">
    <property type="entry name" value="Ribosomal_bL25_CTC"/>
    <property type="match status" value="1"/>
</dbReference>
<dbReference type="InterPro" id="IPR020056">
    <property type="entry name" value="Rbsml_bL25/Gln-tRNA_synth_N"/>
</dbReference>
<dbReference type="InterPro" id="IPR011035">
    <property type="entry name" value="Ribosomal_bL25/Gln-tRNA_synth"/>
</dbReference>
<dbReference type="InterPro" id="IPR020057">
    <property type="entry name" value="Ribosomal_bL25_b-dom"/>
</dbReference>
<dbReference type="InterPro" id="IPR037121">
    <property type="entry name" value="Ribosomal_bL25_C"/>
</dbReference>
<dbReference type="InterPro" id="IPR001021">
    <property type="entry name" value="Ribosomal_bL25_long"/>
</dbReference>
<dbReference type="InterPro" id="IPR029751">
    <property type="entry name" value="Ribosomal_L25_dom"/>
</dbReference>
<dbReference type="InterPro" id="IPR020930">
    <property type="entry name" value="Ribosomal_uL5_bac-type"/>
</dbReference>
<dbReference type="NCBIfam" id="TIGR00731">
    <property type="entry name" value="bL25_bact_ctc"/>
    <property type="match status" value="1"/>
</dbReference>
<dbReference type="NCBIfam" id="NF004128">
    <property type="entry name" value="PRK05618.1-2"/>
    <property type="match status" value="1"/>
</dbReference>
<dbReference type="NCBIfam" id="NF004138">
    <property type="entry name" value="PRK05618.4-1"/>
    <property type="match status" value="1"/>
</dbReference>
<dbReference type="PANTHER" id="PTHR33284">
    <property type="entry name" value="RIBOSOMAL PROTEIN L25/GLN-TRNA SYNTHETASE, ANTI-CODON-BINDING DOMAIN-CONTAINING PROTEIN"/>
    <property type="match status" value="1"/>
</dbReference>
<dbReference type="PANTHER" id="PTHR33284:SF1">
    <property type="entry name" value="RIBOSOMAL PROTEIN L25_GLN-TRNA SYNTHETASE, ANTI-CODON-BINDING DOMAIN-CONTAINING PROTEIN"/>
    <property type="match status" value="1"/>
</dbReference>
<dbReference type="Pfam" id="PF01386">
    <property type="entry name" value="Ribosomal_L25p"/>
    <property type="match status" value="1"/>
</dbReference>
<dbReference type="Pfam" id="PF14693">
    <property type="entry name" value="Ribosomal_TL5_C"/>
    <property type="match status" value="1"/>
</dbReference>
<dbReference type="SUPFAM" id="SSF50715">
    <property type="entry name" value="Ribosomal protein L25-like"/>
    <property type="match status" value="1"/>
</dbReference>
<proteinExistence type="inferred from homology"/>
<reference key="1">
    <citation type="journal article" date="2009" name="Proc. Natl. Acad. Sci. U.S.A.">
        <title>The mosaic genome structure of the Wolbachia wRi strain infecting Drosophila simulans.</title>
        <authorList>
            <person name="Klasson L."/>
            <person name="Westberg J."/>
            <person name="Sapountzis P."/>
            <person name="Naeslund K."/>
            <person name="Lutnaes Y."/>
            <person name="Darby A.C."/>
            <person name="Veneti Z."/>
            <person name="Chen L."/>
            <person name="Braig H.R."/>
            <person name="Garrett R."/>
            <person name="Bourtzis K."/>
            <person name="Andersson S.G."/>
        </authorList>
    </citation>
    <scope>NUCLEOTIDE SEQUENCE [LARGE SCALE GENOMIC DNA]</scope>
    <source>
        <strain>wRi</strain>
    </source>
</reference>
<protein>
    <recommendedName>
        <fullName evidence="1">Large ribosomal subunit protein bL25</fullName>
    </recommendedName>
    <alternativeName>
        <fullName evidence="2">50S ribosomal protein L25</fullName>
    </alternativeName>
    <alternativeName>
        <fullName evidence="1">General stress protein CTC</fullName>
    </alternativeName>
</protein>
<gene>
    <name evidence="1" type="primary">rplY</name>
    <name evidence="1" type="synonym">ctc</name>
    <name type="ordered locus">WRi_000820</name>
</gene>
<evidence type="ECO:0000255" key="1">
    <source>
        <dbReference type="HAMAP-Rule" id="MF_01334"/>
    </source>
</evidence>
<evidence type="ECO:0000305" key="2"/>
<organism>
    <name type="scientific">Wolbachia sp. subsp. Drosophila simulans (strain wRi)</name>
    <dbReference type="NCBI Taxonomy" id="66084"/>
    <lineage>
        <taxon>Bacteria</taxon>
        <taxon>Pseudomonadati</taxon>
        <taxon>Pseudomonadota</taxon>
        <taxon>Alphaproteobacteria</taxon>
        <taxon>Rickettsiales</taxon>
        <taxon>Anaplasmataceae</taxon>
        <taxon>Wolbachieae</taxon>
        <taxon>Wolbachia</taxon>
    </lineage>
</organism>